<dbReference type="EC" id="3.6.1.-" evidence="2"/>
<dbReference type="EMBL" id="BC109781">
    <property type="protein sequence ID" value="AAI09782.1"/>
    <property type="molecule type" value="mRNA"/>
</dbReference>
<dbReference type="RefSeq" id="NP_001033175.1">
    <property type="nucleotide sequence ID" value="NM_001038086.1"/>
</dbReference>
<dbReference type="PDB" id="3IYG">
    <property type="method" value="EM"/>
    <property type="chains" value="A=7-535"/>
</dbReference>
<dbReference type="PDB" id="4B2T">
    <property type="method" value="X-ray"/>
    <property type="resolution" value="5.50 A"/>
    <property type="chains" value="A/a=1-556"/>
</dbReference>
<dbReference type="PDBsum" id="3IYG"/>
<dbReference type="PDBsum" id="4B2T"/>
<dbReference type="SMR" id="Q32L40"/>
<dbReference type="BioGRID" id="168674">
    <property type="interactions" value="5"/>
</dbReference>
<dbReference type="CORUM" id="Q32L40"/>
<dbReference type="DIP" id="DIP-58617N"/>
<dbReference type="FunCoup" id="Q32L40">
    <property type="interactions" value="3993"/>
</dbReference>
<dbReference type="IntAct" id="Q32L40">
    <property type="interactions" value="2"/>
</dbReference>
<dbReference type="STRING" id="9913.ENSBTAP00000003662"/>
<dbReference type="PaxDb" id="9913-ENSBTAP00000003662"/>
<dbReference type="PeptideAtlas" id="Q32L40"/>
<dbReference type="GeneID" id="512043"/>
<dbReference type="KEGG" id="bta:512043"/>
<dbReference type="CTD" id="6950"/>
<dbReference type="eggNOG" id="KOG0360">
    <property type="taxonomic scope" value="Eukaryota"/>
</dbReference>
<dbReference type="InParanoid" id="Q32L40"/>
<dbReference type="OrthoDB" id="496at2759"/>
<dbReference type="BRENDA" id="3.6.4.B10">
    <property type="organism ID" value="908"/>
</dbReference>
<dbReference type="EvolutionaryTrace" id="Q32L40"/>
<dbReference type="Proteomes" id="UP000009136">
    <property type="component" value="Unplaced"/>
</dbReference>
<dbReference type="GO" id="GO:0005813">
    <property type="term" value="C:centrosome"/>
    <property type="evidence" value="ECO:0007669"/>
    <property type="project" value="UniProtKB-SubCell"/>
</dbReference>
<dbReference type="GO" id="GO:0005832">
    <property type="term" value="C:chaperonin-containing T-complex"/>
    <property type="evidence" value="ECO:0000314"/>
    <property type="project" value="UniProtKB"/>
</dbReference>
<dbReference type="GO" id="GO:0005524">
    <property type="term" value="F:ATP binding"/>
    <property type="evidence" value="ECO:0007669"/>
    <property type="project" value="UniProtKB-KW"/>
</dbReference>
<dbReference type="GO" id="GO:0016887">
    <property type="term" value="F:ATP hydrolysis activity"/>
    <property type="evidence" value="ECO:0007669"/>
    <property type="project" value="InterPro"/>
</dbReference>
<dbReference type="GO" id="GO:0140662">
    <property type="term" value="F:ATP-dependent protein folding chaperone"/>
    <property type="evidence" value="ECO:0007669"/>
    <property type="project" value="InterPro"/>
</dbReference>
<dbReference type="GO" id="GO:0051082">
    <property type="term" value="F:unfolded protein binding"/>
    <property type="evidence" value="ECO:0000318"/>
    <property type="project" value="GO_Central"/>
</dbReference>
<dbReference type="GO" id="GO:0006457">
    <property type="term" value="P:protein folding"/>
    <property type="evidence" value="ECO:0000318"/>
    <property type="project" value="GO_Central"/>
</dbReference>
<dbReference type="CDD" id="cd03335">
    <property type="entry name" value="TCP1_alpha"/>
    <property type="match status" value="1"/>
</dbReference>
<dbReference type="FunFam" id="3.50.7.10:FF:000009">
    <property type="entry name" value="T-complex protein 1 subunit alpha"/>
    <property type="match status" value="1"/>
</dbReference>
<dbReference type="FunFam" id="3.30.260.10:FF:000022">
    <property type="entry name" value="T-complex protein 1 subunit eta"/>
    <property type="match status" value="1"/>
</dbReference>
<dbReference type="FunFam" id="1.10.560.10:FF:000070">
    <property type="entry name" value="Uncharacterized protein"/>
    <property type="match status" value="1"/>
</dbReference>
<dbReference type="FunFam" id="3.30.260.10:FF:000040">
    <property type="entry name" value="Uncharacterized protein"/>
    <property type="match status" value="1"/>
</dbReference>
<dbReference type="Gene3D" id="3.50.7.10">
    <property type="entry name" value="GroEL"/>
    <property type="match status" value="1"/>
</dbReference>
<dbReference type="Gene3D" id="1.10.560.10">
    <property type="entry name" value="GroEL-like equatorial domain"/>
    <property type="match status" value="1"/>
</dbReference>
<dbReference type="Gene3D" id="3.30.260.10">
    <property type="entry name" value="TCP-1-like chaperonin intermediate domain"/>
    <property type="match status" value="1"/>
</dbReference>
<dbReference type="InterPro" id="IPR012715">
    <property type="entry name" value="Chap_CCT_alpha"/>
</dbReference>
<dbReference type="InterPro" id="IPR017998">
    <property type="entry name" value="Chaperone_TCP-1"/>
</dbReference>
<dbReference type="InterPro" id="IPR002194">
    <property type="entry name" value="Chaperonin_TCP-1_CS"/>
</dbReference>
<dbReference type="InterPro" id="IPR002423">
    <property type="entry name" value="Cpn60/GroEL/TCP-1"/>
</dbReference>
<dbReference type="InterPro" id="IPR027409">
    <property type="entry name" value="GroEL-like_apical_dom_sf"/>
</dbReference>
<dbReference type="InterPro" id="IPR027413">
    <property type="entry name" value="GROEL-like_equatorial_sf"/>
</dbReference>
<dbReference type="InterPro" id="IPR027410">
    <property type="entry name" value="TCP-1-like_intermed_sf"/>
</dbReference>
<dbReference type="InterPro" id="IPR053374">
    <property type="entry name" value="TCP-1_chaperonin"/>
</dbReference>
<dbReference type="InterPro" id="IPR054827">
    <property type="entry name" value="thermosome_alpha"/>
</dbReference>
<dbReference type="NCBIfam" id="TIGR02340">
    <property type="entry name" value="chap_CCT_alpha"/>
    <property type="match status" value="1"/>
</dbReference>
<dbReference type="NCBIfam" id="NF041082">
    <property type="entry name" value="thermosome_alpha"/>
    <property type="match status" value="1"/>
</dbReference>
<dbReference type="NCBIfam" id="NF041083">
    <property type="entry name" value="thermosome_beta"/>
    <property type="match status" value="1"/>
</dbReference>
<dbReference type="PANTHER" id="PTHR11353">
    <property type="entry name" value="CHAPERONIN"/>
    <property type="match status" value="1"/>
</dbReference>
<dbReference type="Pfam" id="PF00118">
    <property type="entry name" value="Cpn60_TCP1"/>
    <property type="match status" value="1"/>
</dbReference>
<dbReference type="PRINTS" id="PR00304">
    <property type="entry name" value="TCOMPLEXTCP1"/>
</dbReference>
<dbReference type="SUPFAM" id="SSF52029">
    <property type="entry name" value="GroEL apical domain-like"/>
    <property type="match status" value="1"/>
</dbReference>
<dbReference type="SUPFAM" id="SSF48592">
    <property type="entry name" value="GroEL equatorial domain-like"/>
    <property type="match status" value="1"/>
</dbReference>
<dbReference type="SUPFAM" id="SSF54849">
    <property type="entry name" value="GroEL-intermediate domain like"/>
    <property type="match status" value="1"/>
</dbReference>
<dbReference type="PROSITE" id="PS00750">
    <property type="entry name" value="TCP1_1"/>
    <property type="match status" value="1"/>
</dbReference>
<dbReference type="PROSITE" id="PS00751">
    <property type="entry name" value="TCP1_2"/>
    <property type="match status" value="1"/>
</dbReference>
<dbReference type="PROSITE" id="PS00995">
    <property type="entry name" value="TCP1_3"/>
    <property type="match status" value="1"/>
</dbReference>
<comment type="function">
    <text evidence="2">Component of the chaperonin-containing T-complex (TRiC), a molecular chaperone complex that assists the folding of actin, tubulin and other proteins upon ATP hydrolysis. The TRiC complex mediates the folding of WRAP53/TCAB1, thereby regulating telomere maintenance. As part of the TRiC complex may play a role in the assembly of BBSome, a complex involved in ciliogenesis regulating transports vesicles to the cilia.</text>
</comment>
<comment type="catalytic activity">
    <reaction evidence="2">
        <text>ATP + H2O = ADP + phosphate + H(+)</text>
        <dbReference type="Rhea" id="RHEA:13065"/>
        <dbReference type="ChEBI" id="CHEBI:15377"/>
        <dbReference type="ChEBI" id="CHEBI:15378"/>
        <dbReference type="ChEBI" id="CHEBI:30616"/>
        <dbReference type="ChEBI" id="CHEBI:43474"/>
        <dbReference type="ChEBI" id="CHEBI:456216"/>
    </reaction>
</comment>
<comment type="subunit">
    <text evidence="2">Component of the chaperonin-containing T-complex (TRiC), a hexadecamer composed of two identical back-to-back stacked rings enclosing a protein folding chamber. Each ring is made up of eight different subunits: TCP1/CCT1, CCT2, CCT3, CCT4, CCT5, CCT6A/CCT6, CCT7, CCT8. Interacts with PACRG. Interacts with GBA1. Interacts with DLEC1.</text>
</comment>
<comment type="subcellular location">
    <subcellularLocation>
        <location evidence="2">Cytoplasm</location>
        <location evidence="2">Cytosol</location>
    </subcellularLocation>
    <subcellularLocation>
        <location evidence="2">Cytoplasm</location>
        <location evidence="2">Cytoskeleton</location>
        <location evidence="2">Microtubule organizing center</location>
        <location evidence="2">Centrosome</location>
    </subcellularLocation>
</comment>
<comment type="similarity">
    <text evidence="4">Belongs to the TCP-1 chaperonin family.</text>
</comment>
<sequence length="556" mass="60206">MEGPLSVFGDRSTGEAIRSQNVMAAASIANIVKSSLGPVGLDKMLVDDIGDVTITNDGATILKLLEVEHPAAKVLCELADLQDKEVGDGTTSVVIIAAELLKNADELVKQKIHPTSVISGYRLACKEAVRYISENLIINTDELGRDCLINAAKTSMSSKVIGINGDFFANLVVDAVLAIKYTDIRGQPRYPVNSINVLKAHGRSQMESMLINGYALNCVVGSQGMPKRIVNAKIACLDFSLQKTKMKLGVQVVITDPEKLDQIRQRESDITKERIQKILATGANVILTTGGIDDMCLKYFVEAGAMAVRRVLKRDLKRIAKASGATVLSTLANLEGEETFEASMLGQAEEVVQERICDDELILIKNTKARTSASVILRGANDFMCDEMERSLHDALCVVKRVLESKSVVPGGGAVEAALSIYLENYATSMGSREQLAIAEFARSLPVIPNTLAVNAAQDSTDLVAKLRAFHNEAQVNPERKNLKWIGLDLVNGKPRDNKQAGVFEPTIVKVKSLKFATEAAITILRIDDLIKLHPESKDDKHGGYEDAVHSGALDA</sequence>
<name>TCPA_BOVIN</name>
<proteinExistence type="evidence at protein level"/>
<keyword id="KW-0002">3D-structure</keyword>
<keyword id="KW-0007">Acetylation</keyword>
<keyword id="KW-0067">ATP-binding</keyword>
<keyword id="KW-0143">Chaperone</keyword>
<keyword id="KW-0963">Cytoplasm</keyword>
<keyword id="KW-0206">Cytoskeleton</keyword>
<keyword id="KW-0378">Hydrolase</keyword>
<keyword id="KW-0460">Magnesium</keyword>
<keyword id="KW-0479">Metal-binding</keyword>
<keyword id="KW-0547">Nucleotide-binding</keyword>
<keyword id="KW-0597">Phosphoprotein</keyword>
<keyword id="KW-1185">Reference proteome</keyword>
<organism>
    <name type="scientific">Bos taurus</name>
    <name type="common">Bovine</name>
    <dbReference type="NCBI Taxonomy" id="9913"/>
    <lineage>
        <taxon>Eukaryota</taxon>
        <taxon>Metazoa</taxon>
        <taxon>Chordata</taxon>
        <taxon>Craniata</taxon>
        <taxon>Vertebrata</taxon>
        <taxon>Euteleostomi</taxon>
        <taxon>Mammalia</taxon>
        <taxon>Eutheria</taxon>
        <taxon>Laurasiatheria</taxon>
        <taxon>Artiodactyla</taxon>
        <taxon>Ruminantia</taxon>
        <taxon>Pecora</taxon>
        <taxon>Bovidae</taxon>
        <taxon>Bovinae</taxon>
        <taxon>Bos</taxon>
    </lineage>
</organism>
<accession>Q32L40</accession>
<evidence type="ECO:0000250" key="1">
    <source>
        <dbReference type="UniProtKB" id="P11983"/>
    </source>
</evidence>
<evidence type="ECO:0000250" key="2">
    <source>
        <dbReference type="UniProtKB" id="P17987"/>
    </source>
</evidence>
<evidence type="ECO:0000256" key="3">
    <source>
        <dbReference type="SAM" id="MobiDB-lite"/>
    </source>
</evidence>
<evidence type="ECO:0000305" key="4"/>
<protein>
    <recommendedName>
        <fullName>T-complex protein 1 subunit alpha</fullName>
        <shortName>TCP-1-alpha</shortName>
        <ecNumber evidence="2">3.6.1.-</ecNumber>
    </recommendedName>
    <alternativeName>
        <fullName>CCT-alpha</fullName>
    </alternativeName>
</protein>
<reference key="1">
    <citation type="submission" date="2005-11" db="EMBL/GenBank/DDBJ databases">
        <authorList>
            <consortium name="NIH - Mammalian Gene Collection (MGC) project"/>
        </authorList>
    </citation>
    <scope>NUCLEOTIDE SEQUENCE [LARGE SCALE MRNA]</scope>
    <source>
        <strain>Crossbred X Angus</strain>
        <tissue>Liver</tissue>
    </source>
</reference>
<feature type="chain" id="PRO_0000236258" description="T-complex protein 1 subunit alpha">
    <location>
        <begin position="1"/>
        <end position="556"/>
    </location>
</feature>
<feature type="region of interest" description="Disordered" evidence="3">
    <location>
        <begin position="536"/>
        <end position="556"/>
    </location>
</feature>
<feature type="compositionally biased region" description="Basic and acidic residues" evidence="3">
    <location>
        <begin position="536"/>
        <end position="549"/>
    </location>
</feature>
<feature type="binding site" evidence="2">
    <location>
        <position position="37"/>
    </location>
    <ligand>
        <name>ADP</name>
        <dbReference type="ChEBI" id="CHEBI:456216"/>
    </ligand>
</feature>
<feature type="binding site" evidence="2">
    <location>
        <position position="37"/>
    </location>
    <ligand>
        <name>ATP</name>
        <dbReference type="ChEBI" id="CHEBI:30616"/>
    </ligand>
</feature>
<feature type="binding site" evidence="2">
    <location>
        <position position="88"/>
    </location>
    <ligand>
        <name>Mg(2+)</name>
        <dbReference type="ChEBI" id="CHEBI:18420"/>
    </ligand>
</feature>
<feature type="binding site" evidence="2">
    <location>
        <position position="89"/>
    </location>
    <ligand>
        <name>ADP</name>
        <dbReference type="ChEBI" id="CHEBI:456216"/>
    </ligand>
</feature>
<feature type="binding site" evidence="2">
    <location>
        <position position="89"/>
    </location>
    <ligand>
        <name>ATP</name>
        <dbReference type="ChEBI" id="CHEBI:30616"/>
    </ligand>
</feature>
<feature type="binding site" evidence="2">
    <location>
        <position position="90"/>
    </location>
    <ligand>
        <name>ADP</name>
        <dbReference type="ChEBI" id="CHEBI:456216"/>
    </ligand>
</feature>
<feature type="binding site" evidence="2">
    <location>
        <position position="90"/>
    </location>
    <ligand>
        <name>ATP</name>
        <dbReference type="ChEBI" id="CHEBI:30616"/>
    </ligand>
</feature>
<feature type="binding site" evidence="2">
    <location>
        <position position="91"/>
    </location>
    <ligand>
        <name>ADP</name>
        <dbReference type="ChEBI" id="CHEBI:456216"/>
    </ligand>
</feature>
<feature type="binding site" evidence="2">
    <location>
        <position position="91"/>
    </location>
    <ligand>
        <name>ATP</name>
        <dbReference type="ChEBI" id="CHEBI:30616"/>
    </ligand>
</feature>
<feature type="binding site" evidence="2">
    <location>
        <position position="92"/>
    </location>
    <ligand>
        <name>ADP</name>
        <dbReference type="ChEBI" id="CHEBI:456216"/>
    </ligand>
</feature>
<feature type="binding site" evidence="2">
    <location>
        <position position="158"/>
    </location>
    <ligand>
        <name>ADP</name>
        <dbReference type="ChEBI" id="CHEBI:456216"/>
    </ligand>
</feature>
<feature type="binding site" evidence="2">
    <location>
        <position position="159"/>
    </location>
    <ligand>
        <name>ADP</name>
        <dbReference type="ChEBI" id="CHEBI:456216"/>
    </ligand>
</feature>
<feature type="binding site" evidence="2">
    <location>
        <position position="412"/>
    </location>
    <ligand>
        <name>ADP</name>
        <dbReference type="ChEBI" id="CHEBI:456216"/>
    </ligand>
</feature>
<feature type="binding site" evidence="2">
    <location>
        <position position="505"/>
    </location>
    <ligand>
        <name>ADP</name>
        <dbReference type="ChEBI" id="CHEBI:456216"/>
    </ligand>
</feature>
<feature type="modified residue" description="N-acetylmethionine" evidence="2">
    <location>
        <position position="1"/>
    </location>
</feature>
<feature type="modified residue" description="Phosphoserine" evidence="2">
    <location>
        <position position="6"/>
    </location>
</feature>
<feature type="modified residue" description="Phosphotyrosine" evidence="2">
    <location>
        <position position="181"/>
    </location>
</feature>
<feature type="modified residue" description="N6-acetyllysine" evidence="2">
    <location>
        <position position="199"/>
    </location>
</feature>
<feature type="modified residue" description="N6-acetyllysine" evidence="2">
    <location>
        <position position="400"/>
    </location>
</feature>
<feature type="modified residue" description="N6-acetyllysine" evidence="1">
    <location>
        <position position="494"/>
    </location>
</feature>
<feature type="modified residue" description="Phosphoserine" evidence="2">
    <location>
        <position position="551"/>
    </location>
</feature>
<gene>
    <name type="primary">TCP1</name>
    <name type="synonym">CCT1</name>
</gene>